<organism>
    <name type="scientific">Thermotoga maritima (strain ATCC 43589 / DSM 3109 / JCM 10099 / NBRC 100826 / MSB8)</name>
    <dbReference type="NCBI Taxonomy" id="243274"/>
    <lineage>
        <taxon>Bacteria</taxon>
        <taxon>Thermotogati</taxon>
        <taxon>Thermotogota</taxon>
        <taxon>Thermotogae</taxon>
        <taxon>Thermotogales</taxon>
        <taxon>Thermotogaceae</taxon>
        <taxon>Thermotoga</taxon>
    </lineage>
</organism>
<accession>Q56318</accession>
<proteinExistence type="inferred from homology"/>
<gene>
    <name type="ordered locus">TM_0019</name>
</gene>
<comment type="similarity">
    <text evidence="3">Belongs to the short-chain dehydrogenases/reductases (SDR) family.</text>
</comment>
<reference key="1">
    <citation type="journal article" date="1996" name="J. Bacteriol.">
        <title>Molecular and phylogenetic characterization of pyruvate and 2-ketoisovalerate ferredoxin oxidoreductases from Pyrococcus furiosus and pyruvate ferredoxin oxidoreductase from Thermotoga maritima.</title>
        <authorList>
            <person name="Kletzin A."/>
            <person name="Adams M.W.W."/>
        </authorList>
    </citation>
    <scope>NUCLEOTIDE SEQUENCE [GENOMIC DNA]</scope>
    <source>
        <strain>ATCC 43589 / DSM 3109 / JCM 10099 / NBRC 100826 / MSB8</strain>
    </source>
</reference>
<reference key="2">
    <citation type="journal article" date="1999" name="Nature">
        <title>Evidence for lateral gene transfer between Archaea and Bacteria from genome sequence of Thermotoga maritima.</title>
        <authorList>
            <person name="Nelson K.E."/>
            <person name="Clayton R.A."/>
            <person name="Gill S.R."/>
            <person name="Gwinn M.L."/>
            <person name="Dodson R.J."/>
            <person name="Haft D.H."/>
            <person name="Hickey E.K."/>
            <person name="Peterson J.D."/>
            <person name="Nelson W.C."/>
            <person name="Ketchum K.A."/>
            <person name="McDonald L.A."/>
            <person name="Utterback T.R."/>
            <person name="Malek J.A."/>
            <person name="Linher K.D."/>
            <person name="Garrett M.M."/>
            <person name="Stewart A.M."/>
            <person name="Cotton M.D."/>
            <person name="Pratt M.S."/>
            <person name="Phillips C.A."/>
            <person name="Richardson D.L."/>
            <person name="Heidelberg J.F."/>
            <person name="Sutton G.G."/>
            <person name="Fleischmann R.D."/>
            <person name="Eisen J.A."/>
            <person name="White O."/>
            <person name="Salzberg S.L."/>
            <person name="Smith H.O."/>
            <person name="Venter J.C."/>
            <person name="Fraser C.M."/>
        </authorList>
    </citation>
    <scope>NUCLEOTIDE SEQUENCE [LARGE SCALE GENOMIC DNA]</scope>
    <source>
        <strain>ATCC 43589 / DSM 3109 / JCM 10099 / NBRC 100826 / MSB8</strain>
    </source>
</reference>
<sequence length="256" mass="28078">MLEGKVAVVTGGGQGIGAAIAQLFAENGMKVVIAEIDEEAGVEREEMLRERGLDVTFVKTDVADENSVKNMVRKTVEIYGGVDVLVNNAAVMSVKSIFERPLEEWERVIRVNLTGPYICSRYCAEEMIKRGGGVIINIASTRAFQSEPDTEPYSASKGGLVALTHSLAVSLSRYHIRVVSISPGWIETSEWKKKSLRKKPDLRPIDHEQHPAGRVGNPLDIAHLCVFLADDEKAGFITGTNFIVDGGMTVKMIYEE</sequence>
<protein>
    <recommendedName>
        <fullName>Uncharacterized oxidoreductase TM_0019</fullName>
        <ecNumber>1.-.-.-</ecNumber>
    </recommendedName>
</protein>
<feature type="chain" id="PRO_0000054866" description="Uncharacterized oxidoreductase TM_0019">
    <location>
        <begin position="1"/>
        <end position="256"/>
    </location>
</feature>
<feature type="active site" description="Proton acceptor" evidence="2">
    <location>
        <position position="153"/>
    </location>
</feature>
<feature type="binding site" evidence="1">
    <location>
        <begin position="9"/>
        <end position="33"/>
    </location>
    <ligand>
        <name>NADP(+)</name>
        <dbReference type="ChEBI" id="CHEBI:58349"/>
    </ligand>
</feature>
<feature type="binding site" evidence="1">
    <location>
        <position position="140"/>
    </location>
    <ligand>
        <name>substrate</name>
    </ligand>
</feature>
<feature type="sequence conflict" description="In Ref. 1; CAA59459." evidence="3" ref="1">
    <original>RGGGVII</original>
    <variation>TRWRSDH</variation>
    <location>
        <begin position="130"/>
        <end position="136"/>
    </location>
</feature>
<name>Y019_THEMA</name>
<keyword id="KW-0521">NADP</keyword>
<keyword id="KW-0560">Oxidoreductase</keyword>
<keyword id="KW-1185">Reference proteome</keyword>
<dbReference type="EC" id="1.-.-.-"/>
<dbReference type="EMBL" id="X85171">
    <property type="protein sequence ID" value="CAA59459.1"/>
    <property type="molecule type" value="Genomic_DNA"/>
</dbReference>
<dbReference type="EMBL" id="AE000512">
    <property type="protein sequence ID" value="AAD35113.1"/>
    <property type="molecule type" value="Genomic_DNA"/>
</dbReference>
<dbReference type="PIR" id="E72427">
    <property type="entry name" value="E72427"/>
</dbReference>
<dbReference type="RefSeq" id="NP_227835.1">
    <property type="nucleotide sequence ID" value="NC_000853.1"/>
</dbReference>
<dbReference type="RefSeq" id="WP_004082464.1">
    <property type="nucleotide sequence ID" value="NZ_CP011107.1"/>
</dbReference>
<dbReference type="SMR" id="Q56318"/>
<dbReference type="STRING" id="243274.TM_0019"/>
<dbReference type="PaxDb" id="243274-THEMA_04705"/>
<dbReference type="EnsemblBacteria" id="AAD35113">
    <property type="protein sequence ID" value="AAD35113"/>
    <property type="gene ID" value="TM_0019"/>
</dbReference>
<dbReference type="KEGG" id="tma:TM0019"/>
<dbReference type="KEGG" id="tmi:THEMA_04705"/>
<dbReference type="KEGG" id="tmm:Tmari_0016"/>
<dbReference type="KEGG" id="tmw:THMA_0015"/>
<dbReference type="eggNOG" id="COG1028">
    <property type="taxonomic scope" value="Bacteria"/>
</dbReference>
<dbReference type="InParanoid" id="Q56318"/>
<dbReference type="OrthoDB" id="9803333at2"/>
<dbReference type="Proteomes" id="UP000008183">
    <property type="component" value="Chromosome"/>
</dbReference>
<dbReference type="GO" id="GO:0016491">
    <property type="term" value="F:oxidoreductase activity"/>
    <property type="evidence" value="ECO:0007669"/>
    <property type="project" value="UniProtKB-KW"/>
</dbReference>
<dbReference type="FunFam" id="3.40.50.720:FF:000084">
    <property type="entry name" value="Short-chain dehydrogenase reductase"/>
    <property type="match status" value="1"/>
</dbReference>
<dbReference type="Gene3D" id="3.40.50.720">
    <property type="entry name" value="NAD(P)-binding Rossmann-like Domain"/>
    <property type="match status" value="1"/>
</dbReference>
<dbReference type="InterPro" id="IPR036291">
    <property type="entry name" value="NAD(P)-bd_dom_sf"/>
</dbReference>
<dbReference type="InterPro" id="IPR020904">
    <property type="entry name" value="Sc_DH/Rdtase_CS"/>
</dbReference>
<dbReference type="InterPro" id="IPR002347">
    <property type="entry name" value="SDR_fam"/>
</dbReference>
<dbReference type="NCBIfam" id="NF005559">
    <property type="entry name" value="PRK07231.1"/>
    <property type="match status" value="1"/>
</dbReference>
<dbReference type="PANTHER" id="PTHR24321">
    <property type="entry name" value="DEHYDROGENASES, SHORT CHAIN"/>
    <property type="match status" value="1"/>
</dbReference>
<dbReference type="PANTHER" id="PTHR24321:SF8">
    <property type="entry name" value="ESTRADIOL 17-BETA-DEHYDROGENASE 8-RELATED"/>
    <property type="match status" value="1"/>
</dbReference>
<dbReference type="Pfam" id="PF13561">
    <property type="entry name" value="adh_short_C2"/>
    <property type="match status" value="1"/>
</dbReference>
<dbReference type="PRINTS" id="PR00081">
    <property type="entry name" value="GDHRDH"/>
</dbReference>
<dbReference type="PRINTS" id="PR00080">
    <property type="entry name" value="SDRFAMILY"/>
</dbReference>
<dbReference type="SUPFAM" id="SSF51735">
    <property type="entry name" value="NAD(P)-binding Rossmann-fold domains"/>
    <property type="match status" value="1"/>
</dbReference>
<dbReference type="PROSITE" id="PS00061">
    <property type="entry name" value="ADH_SHORT"/>
    <property type="match status" value="1"/>
</dbReference>
<evidence type="ECO:0000250" key="1"/>
<evidence type="ECO:0000255" key="2">
    <source>
        <dbReference type="PROSITE-ProRule" id="PRU10001"/>
    </source>
</evidence>
<evidence type="ECO:0000305" key="3"/>